<dbReference type="EC" id="3.6.4.-" evidence="1"/>
<dbReference type="EMBL" id="AE010300">
    <property type="protein sequence ID" value="AAN48009.1"/>
    <property type="molecule type" value="Genomic_DNA"/>
</dbReference>
<dbReference type="RefSeq" id="NP_710991.1">
    <property type="nucleotide sequence ID" value="NC_004342.2"/>
</dbReference>
<dbReference type="RefSeq" id="WP_001129835.1">
    <property type="nucleotide sequence ID" value="NC_004342.2"/>
</dbReference>
<dbReference type="SMR" id="Q8F7Y2"/>
<dbReference type="FunCoup" id="Q8F7Y2">
    <property type="interactions" value="238"/>
</dbReference>
<dbReference type="STRING" id="189518.LA_0810"/>
<dbReference type="PaxDb" id="189518-LA_0810"/>
<dbReference type="EnsemblBacteria" id="AAN48009">
    <property type="protein sequence ID" value="AAN48009"/>
    <property type="gene ID" value="LA_0810"/>
</dbReference>
<dbReference type="GeneID" id="61142686"/>
<dbReference type="KEGG" id="lil:LA_0810"/>
<dbReference type="PATRIC" id="fig|189518.3.peg.815"/>
<dbReference type="HOGENOM" id="CLU_055599_1_0_12"/>
<dbReference type="InParanoid" id="Q8F7Y2"/>
<dbReference type="OrthoDB" id="9804478at2"/>
<dbReference type="Proteomes" id="UP000001408">
    <property type="component" value="Chromosome I"/>
</dbReference>
<dbReference type="GO" id="GO:0005737">
    <property type="term" value="C:cytoplasm"/>
    <property type="evidence" value="ECO:0007669"/>
    <property type="project" value="UniProtKB-SubCell"/>
</dbReference>
<dbReference type="GO" id="GO:0048476">
    <property type="term" value="C:Holliday junction resolvase complex"/>
    <property type="evidence" value="ECO:0007669"/>
    <property type="project" value="UniProtKB-UniRule"/>
</dbReference>
<dbReference type="GO" id="GO:0005524">
    <property type="term" value="F:ATP binding"/>
    <property type="evidence" value="ECO:0007669"/>
    <property type="project" value="UniProtKB-UniRule"/>
</dbReference>
<dbReference type="GO" id="GO:0016887">
    <property type="term" value="F:ATP hydrolysis activity"/>
    <property type="evidence" value="ECO:0007669"/>
    <property type="project" value="InterPro"/>
</dbReference>
<dbReference type="GO" id="GO:0000400">
    <property type="term" value="F:four-way junction DNA binding"/>
    <property type="evidence" value="ECO:0007669"/>
    <property type="project" value="UniProtKB-UniRule"/>
</dbReference>
<dbReference type="GO" id="GO:0009378">
    <property type="term" value="F:four-way junction helicase activity"/>
    <property type="evidence" value="ECO:0007669"/>
    <property type="project" value="InterPro"/>
</dbReference>
<dbReference type="GO" id="GO:0006310">
    <property type="term" value="P:DNA recombination"/>
    <property type="evidence" value="ECO:0007669"/>
    <property type="project" value="UniProtKB-UniRule"/>
</dbReference>
<dbReference type="GO" id="GO:0006281">
    <property type="term" value="P:DNA repair"/>
    <property type="evidence" value="ECO:0007669"/>
    <property type="project" value="UniProtKB-UniRule"/>
</dbReference>
<dbReference type="CDD" id="cd00009">
    <property type="entry name" value="AAA"/>
    <property type="match status" value="1"/>
</dbReference>
<dbReference type="Gene3D" id="1.10.8.60">
    <property type="match status" value="1"/>
</dbReference>
<dbReference type="Gene3D" id="3.40.50.300">
    <property type="entry name" value="P-loop containing nucleotide triphosphate hydrolases"/>
    <property type="match status" value="1"/>
</dbReference>
<dbReference type="Gene3D" id="1.10.10.10">
    <property type="entry name" value="Winged helix-like DNA-binding domain superfamily/Winged helix DNA-binding domain"/>
    <property type="match status" value="1"/>
</dbReference>
<dbReference type="HAMAP" id="MF_00016">
    <property type="entry name" value="DNA_HJ_migration_RuvB"/>
    <property type="match status" value="1"/>
</dbReference>
<dbReference type="InterPro" id="IPR003593">
    <property type="entry name" value="AAA+_ATPase"/>
</dbReference>
<dbReference type="InterPro" id="IPR041445">
    <property type="entry name" value="AAA_lid_4"/>
</dbReference>
<dbReference type="InterPro" id="IPR004605">
    <property type="entry name" value="DNA_helicase_Holl-junc_RuvB"/>
</dbReference>
<dbReference type="InterPro" id="IPR027417">
    <property type="entry name" value="P-loop_NTPase"/>
</dbReference>
<dbReference type="InterPro" id="IPR008824">
    <property type="entry name" value="RuvB-like_N"/>
</dbReference>
<dbReference type="InterPro" id="IPR008823">
    <property type="entry name" value="RuvB_C"/>
</dbReference>
<dbReference type="InterPro" id="IPR036388">
    <property type="entry name" value="WH-like_DNA-bd_sf"/>
</dbReference>
<dbReference type="InterPro" id="IPR036390">
    <property type="entry name" value="WH_DNA-bd_sf"/>
</dbReference>
<dbReference type="NCBIfam" id="NF000868">
    <property type="entry name" value="PRK00080.1"/>
    <property type="match status" value="1"/>
</dbReference>
<dbReference type="NCBIfam" id="TIGR00635">
    <property type="entry name" value="ruvB"/>
    <property type="match status" value="1"/>
</dbReference>
<dbReference type="PANTHER" id="PTHR42848">
    <property type="match status" value="1"/>
</dbReference>
<dbReference type="PANTHER" id="PTHR42848:SF1">
    <property type="entry name" value="HOLLIDAY JUNCTION BRANCH MIGRATION COMPLEX SUBUNIT RUVB"/>
    <property type="match status" value="1"/>
</dbReference>
<dbReference type="Pfam" id="PF17864">
    <property type="entry name" value="AAA_lid_4"/>
    <property type="match status" value="1"/>
</dbReference>
<dbReference type="Pfam" id="PF05491">
    <property type="entry name" value="RuvB_C"/>
    <property type="match status" value="1"/>
</dbReference>
<dbReference type="Pfam" id="PF05496">
    <property type="entry name" value="RuvB_N"/>
    <property type="match status" value="1"/>
</dbReference>
<dbReference type="SMART" id="SM00382">
    <property type="entry name" value="AAA"/>
    <property type="match status" value="1"/>
</dbReference>
<dbReference type="SUPFAM" id="SSF52540">
    <property type="entry name" value="P-loop containing nucleoside triphosphate hydrolases"/>
    <property type="match status" value="1"/>
</dbReference>
<dbReference type="SUPFAM" id="SSF46785">
    <property type="entry name" value="Winged helix' DNA-binding domain"/>
    <property type="match status" value="1"/>
</dbReference>
<evidence type="ECO:0000255" key="1">
    <source>
        <dbReference type="HAMAP-Rule" id="MF_00016"/>
    </source>
</evidence>
<protein>
    <recommendedName>
        <fullName evidence="1">Holliday junction branch migration complex subunit RuvB</fullName>
        <ecNumber evidence="1">3.6.4.-</ecNumber>
    </recommendedName>
</protein>
<proteinExistence type="inferred from homology"/>
<organism>
    <name type="scientific">Leptospira interrogans serogroup Icterohaemorrhagiae serovar Lai (strain 56601)</name>
    <dbReference type="NCBI Taxonomy" id="189518"/>
    <lineage>
        <taxon>Bacteria</taxon>
        <taxon>Pseudomonadati</taxon>
        <taxon>Spirochaetota</taxon>
        <taxon>Spirochaetia</taxon>
        <taxon>Leptospirales</taxon>
        <taxon>Leptospiraceae</taxon>
        <taxon>Leptospira</taxon>
    </lineage>
</organism>
<feature type="chain" id="PRO_0000165550" description="Holliday junction branch migration complex subunit RuvB">
    <location>
        <begin position="1"/>
        <end position="341"/>
    </location>
</feature>
<feature type="region of interest" description="Large ATPase domain (RuvB-L)" evidence="1">
    <location>
        <begin position="1"/>
        <end position="180"/>
    </location>
</feature>
<feature type="region of interest" description="Small ATPAse domain (RuvB-S)" evidence="1">
    <location>
        <begin position="181"/>
        <end position="251"/>
    </location>
</feature>
<feature type="region of interest" description="Head domain (RuvB-H)" evidence="1">
    <location>
        <begin position="254"/>
        <end position="341"/>
    </location>
</feature>
<feature type="binding site" evidence="1">
    <location>
        <position position="19"/>
    </location>
    <ligand>
        <name>ATP</name>
        <dbReference type="ChEBI" id="CHEBI:30616"/>
    </ligand>
</feature>
<feature type="binding site" evidence="1">
    <location>
        <position position="20"/>
    </location>
    <ligand>
        <name>ATP</name>
        <dbReference type="ChEBI" id="CHEBI:30616"/>
    </ligand>
</feature>
<feature type="binding site" evidence="1">
    <location>
        <position position="61"/>
    </location>
    <ligand>
        <name>ATP</name>
        <dbReference type="ChEBI" id="CHEBI:30616"/>
    </ligand>
</feature>
<feature type="binding site" evidence="1">
    <location>
        <position position="64"/>
    </location>
    <ligand>
        <name>ATP</name>
        <dbReference type="ChEBI" id="CHEBI:30616"/>
    </ligand>
</feature>
<feature type="binding site" evidence="1">
    <location>
        <position position="65"/>
    </location>
    <ligand>
        <name>ATP</name>
        <dbReference type="ChEBI" id="CHEBI:30616"/>
    </ligand>
</feature>
<feature type="binding site" evidence="1">
    <location>
        <position position="65"/>
    </location>
    <ligand>
        <name>Mg(2+)</name>
        <dbReference type="ChEBI" id="CHEBI:18420"/>
    </ligand>
</feature>
<feature type="binding site" evidence="1">
    <location>
        <position position="66"/>
    </location>
    <ligand>
        <name>ATP</name>
        <dbReference type="ChEBI" id="CHEBI:30616"/>
    </ligand>
</feature>
<feature type="binding site" evidence="1">
    <location>
        <position position="170"/>
    </location>
    <ligand>
        <name>ATP</name>
        <dbReference type="ChEBI" id="CHEBI:30616"/>
    </ligand>
</feature>
<feature type="binding site" evidence="1">
    <location>
        <position position="180"/>
    </location>
    <ligand>
        <name>ATP</name>
        <dbReference type="ChEBI" id="CHEBI:30616"/>
    </ligand>
</feature>
<feature type="binding site" evidence="1">
    <location>
        <position position="217"/>
    </location>
    <ligand>
        <name>ATP</name>
        <dbReference type="ChEBI" id="CHEBI:30616"/>
    </ligand>
</feature>
<feature type="binding site" evidence="1">
    <location>
        <position position="309"/>
    </location>
    <ligand>
        <name>DNA</name>
        <dbReference type="ChEBI" id="CHEBI:16991"/>
    </ligand>
</feature>
<feature type="binding site" evidence="1">
    <location>
        <position position="314"/>
    </location>
    <ligand>
        <name>DNA</name>
        <dbReference type="ChEBI" id="CHEBI:16991"/>
    </ligand>
</feature>
<keyword id="KW-0067">ATP-binding</keyword>
<keyword id="KW-0963">Cytoplasm</keyword>
<keyword id="KW-0227">DNA damage</keyword>
<keyword id="KW-0233">DNA recombination</keyword>
<keyword id="KW-0234">DNA repair</keyword>
<keyword id="KW-0238">DNA-binding</keyword>
<keyword id="KW-0378">Hydrolase</keyword>
<keyword id="KW-0547">Nucleotide-binding</keyword>
<keyword id="KW-1185">Reference proteome</keyword>
<gene>
    <name evidence="1" type="primary">ruvB</name>
    <name type="ordered locus">LA_0810</name>
</gene>
<reference key="1">
    <citation type="journal article" date="2003" name="Nature">
        <title>Unique physiological and pathogenic features of Leptospira interrogans revealed by whole-genome sequencing.</title>
        <authorList>
            <person name="Ren S.-X."/>
            <person name="Fu G."/>
            <person name="Jiang X.-G."/>
            <person name="Zeng R."/>
            <person name="Miao Y.-G."/>
            <person name="Xu H."/>
            <person name="Zhang Y.-X."/>
            <person name="Xiong H."/>
            <person name="Lu G."/>
            <person name="Lu L.-F."/>
            <person name="Jiang H.-Q."/>
            <person name="Jia J."/>
            <person name="Tu Y.-F."/>
            <person name="Jiang J.-X."/>
            <person name="Gu W.-Y."/>
            <person name="Zhang Y.-Q."/>
            <person name="Cai Z."/>
            <person name="Sheng H.-H."/>
            <person name="Yin H.-F."/>
            <person name="Zhang Y."/>
            <person name="Zhu G.-F."/>
            <person name="Wan M."/>
            <person name="Huang H.-L."/>
            <person name="Qian Z."/>
            <person name="Wang S.-Y."/>
            <person name="Ma W."/>
            <person name="Yao Z.-J."/>
            <person name="Shen Y."/>
            <person name="Qiang B.-Q."/>
            <person name="Xia Q.-C."/>
            <person name="Guo X.-K."/>
            <person name="Danchin A."/>
            <person name="Saint Girons I."/>
            <person name="Somerville R.L."/>
            <person name="Wen Y.-M."/>
            <person name="Shi M.-H."/>
            <person name="Chen Z."/>
            <person name="Xu J.-G."/>
            <person name="Zhao G.-P."/>
        </authorList>
    </citation>
    <scope>NUCLEOTIDE SEQUENCE [LARGE SCALE GENOMIC DNA]</scope>
    <source>
        <strain>56601</strain>
    </source>
</reference>
<accession>Q8F7Y2</accession>
<name>RUVB_LEPIN</name>
<sequence>MAKSHTLNPEEEFEEESGLRPSLLSEFIGQKEVLNNLTVYVQAAKNRKRALDHVLISGPPGLGKTTLAGIISNELGTRLTITSAPVITKGADLARLLTSMGENEILFIDEIHTLPKKLEEILYPAMENYMIDLVIGEGVTAQMVQIPLKPFTLVGATTRSGLISEPLKSRFGIQLRLDYYNDEEMKQIVLRSSKILGVLIEDDAALEIGKRSRKTPRIANHLLKRIRDFSEVEGNLSVKKNLCLKAFEKMGIDDLGLDGMDRQILDCMIDRYKGGPVGLKAIAVVVGEEEKTIEDTYESFMVRIGLINRTPAGRVATEKAYRQLKRMEDFSVHHGQDPTLF</sequence>
<comment type="function">
    <text evidence="1">The RuvA-RuvB-RuvC complex processes Holliday junction (HJ) DNA during genetic recombination and DNA repair, while the RuvA-RuvB complex plays an important role in the rescue of blocked DNA replication forks via replication fork reversal (RFR). RuvA specifically binds to HJ cruciform DNA, conferring on it an open structure. The RuvB hexamer acts as an ATP-dependent pump, pulling dsDNA into and through the RuvAB complex. RuvB forms 2 homohexamers on either side of HJ DNA bound by 1 or 2 RuvA tetramers; 4 subunits per hexamer contact DNA at a time. Coordinated motions by a converter formed by DNA-disengaged RuvB subunits stimulates ATP hydrolysis and nucleotide exchange. Immobilization of the converter enables RuvB to convert the ATP-contained energy into a lever motion, pulling 2 nucleotides of DNA out of the RuvA tetramer per ATP hydrolyzed, thus driving DNA branch migration. The RuvB motors rotate together with the DNA substrate, which together with the progressing nucleotide cycle form the mechanistic basis for DNA recombination by continuous HJ branch migration. Branch migration allows RuvC to scan DNA until it finds its consensus sequence, where it cleaves and resolves cruciform DNA.</text>
</comment>
<comment type="catalytic activity">
    <reaction evidence="1">
        <text>ATP + H2O = ADP + phosphate + H(+)</text>
        <dbReference type="Rhea" id="RHEA:13065"/>
        <dbReference type="ChEBI" id="CHEBI:15377"/>
        <dbReference type="ChEBI" id="CHEBI:15378"/>
        <dbReference type="ChEBI" id="CHEBI:30616"/>
        <dbReference type="ChEBI" id="CHEBI:43474"/>
        <dbReference type="ChEBI" id="CHEBI:456216"/>
    </reaction>
</comment>
<comment type="subunit">
    <text evidence="1">Homohexamer. Forms an RuvA(8)-RuvB(12)-Holliday junction (HJ) complex. HJ DNA is sandwiched between 2 RuvA tetramers; dsDNA enters through RuvA and exits via RuvB. An RuvB hexamer assembles on each DNA strand where it exits the tetramer. Each RuvB hexamer is contacted by two RuvA subunits (via domain III) on 2 adjacent RuvB subunits; this complex drives branch migration. In the full resolvosome a probable DNA-RuvA(4)-RuvB(12)-RuvC(2) complex forms which resolves the HJ.</text>
</comment>
<comment type="subcellular location">
    <subcellularLocation>
        <location evidence="1">Cytoplasm</location>
    </subcellularLocation>
</comment>
<comment type="domain">
    <text evidence="1">Has 3 domains, the large (RuvB-L) and small ATPase (RuvB-S) domains and the C-terminal head (RuvB-H) domain. The head domain binds DNA, while the ATPase domains jointly bind ATP, ADP or are empty depending on the state of the subunit in the translocation cycle. During a single DNA translocation step the structure of each domain remains the same, but their relative positions change.</text>
</comment>
<comment type="similarity">
    <text evidence="1">Belongs to the RuvB family.</text>
</comment>